<accession>A4G1U9</accession>
<sequence length="352" mass="38705">MSIQTDDFSEQRVIAATPASANEEAIERALRPKQLDEYVGQEKIRGQLEIFITAARQRREALDHTLLFGPPGLGKTTLAHIIAREMGVNLRQTSGPVLERAGDLAALLTNLEANDVLFIDEIHRLSPVVEEILYPALEDYQIDIMIGEGPAARSVRLDLQPFTLVGATTRAGMLTNPLRDRFGIVARLEFYTPLELTRIVTRSSSLLNAPIDEDGAFEIAKRSRGTPRIANRLLRRVRDYAEVKGNGDITKAMADAALVMLDVDPVGFDVMDRKLLEAVLFKFNGGPVGLDNLAAAIGEERDTIEDVLEPYLIQQGFLQRTPRGRIATPVAYAHFGVTAPQTGPNGELWGGQ</sequence>
<reference key="1">
    <citation type="journal article" date="2007" name="PLoS Genet.">
        <title>A tale of two oxidation states: bacterial colonization of arsenic-rich environments.</title>
        <authorList>
            <person name="Muller D."/>
            <person name="Medigue C."/>
            <person name="Koechler S."/>
            <person name="Barbe V."/>
            <person name="Barakat M."/>
            <person name="Talla E."/>
            <person name="Bonnefoy V."/>
            <person name="Krin E."/>
            <person name="Arsene-Ploetze F."/>
            <person name="Carapito C."/>
            <person name="Chandler M."/>
            <person name="Cournoyer B."/>
            <person name="Cruveiller S."/>
            <person name="Dossat C."/>
            <person name="Duval S."/>
            <person name="Heymann M."/>
            <person name="Leize E."/>
            <person name="Lieutaud A."/>
            <person name="Lievremont D."/>
            <person name="Makita Y."/>
            <person name="Mangenot S."/>
            <person name="Nitschke W."/>
            <person name="Ortet P."/>
            <person name="Perdrial N."/>
            <person name="Schoepp B."/>
            <person name="Siguier P."/>
            <person name="Simeonova D.D."/>
            <person name="Rouy Z."/>
            <person name="Segurens B."/>
            <person name="Turlin E."/>
            <person name="Vallenet D."/>
            <person name="van Dorsselaer A."/>
            <person name="Weiss S."/>
            <person name="Weissenbach J."/>
            <person name="Lett M.-C."/>
            <person name="Danchin A."/>
            <person name="Bertin P.N."/>
        </authorList>
    </citation>
    <scope>NUCLEOTIDE SEQUENCE [LARGE SCALE GENOMIC DNA]</scope>
    <source>
        <strain>ULPAs1</strain>
    </source>
</reference>
<comment type="function">
    <text evidence="1">The RuvA-RuvB-RuvC complex processes Holliday junction (HJ) DNA during genetic recombination and DNA repair, while the RuvA-RuvB complex plays an important role in the rescue of blocked DNA replication forks via replication fork reversal (RFR). RuvA specifically binds to HJ cruciform DNA, conferring on it an open structure. The RuvB hexamer acts as an ATP-dependent pump, pulling dsDNA into and through the RuvAB complex. RuvB forms 2 homohexamers on either side of HJ DNA bound by 1 or 2 RuvA tetramers; 4 subunits per hexamer contact DNA at a time. Coordinated motions by a converter formed by DNA-disengaged RuvB subunits stimulates ATP hydrolysis and nucleotide exchange. Immobilization of the converter enables RuvB to convert the ATP-contained energy into a lever motion, pulling 2 nucleotides of DNA out of the RuvA tetramer per ATP hydrolyzed, thus driving DNA branch migration. The RuvB motors rotate together with the DNA substrate, which together with the progressing nucleotide cycle form the mechanistic basis for DNA recombination by continuous HJ branch migration. Branch migration allows RuvC to scan DNA until it finds its consensus sequence, where it cleaves and resolves cruciform DNA.</text>
</comment>
<comment type="catalytic activity">
    <reaction evidence="1">
        <text>ATP + H2O = ADP + phosphate + H(+)</text>
        <dbReference type="Rhea" id="RHEA:13065"/>
        <dbReference type="ChEBI" id="CHEBI:15377"/>
        <dbReference type="ChEBI" id="CHEBI:15378"/>
        <dbReference type="ChEBI" id="CHEBI:30616"/>
        <dbReference type="ChEBI" id="CHEBI:43474"/>
        <dbReference type="ChEBI" id="CHEBI:456216"/>
    </reaction>
</comment>
<comment type="subunit">
    <text evidence="1">Homohexamer. Forms an RuvA(8)-RuvB(12)-Holliday junction (HJ) complex. HJ DNA is sandwiched between 2 RuvA tetramers; dsDNA enters through RuvA and exits via RuvB. An RuvB hexamer assembles on each DNA strand where it exits the tetramer. Each RuvB hexamer is contacted by two RuvA subunits (via domain III) on 2 adjacent RuvB subunits; this complex drives branch migration. In the full resolvosome a probable DNA-RuvA(4)-RuvB(12)-RuvC(2) complex forms which resolves the HJ.</text>
</comment>
<comment type="subcellular location">
    <subcellularLocation>
        <location evidence="1">Cytoplasm</location>
    </subcellularLocation>
</comment>
<comment type="domain">
    <text evidence="1">Has 3 domains, the large (RuvB-L) and small ATPase (RuvB-S) domains and the C-terminal head (RuvB-H) domain. The head domain binds DNA, while the ATPase domains jointly bind ATP, ADP or are empty depending on the state of the subunit in the translocation cycle. During a single DNA translocation step the structure of each domain remains the same, but their relative positions change.</text>
</comment>
<comment type="similarity">
    <text evidence="1">Belongs to the RuvB family.</text>
</comment>
<name>RUVB_HERAR</name>
<proteinExistence type="inferred from homology"/>
<dbReference type="EC" id="3.6.4.-" evidence="1"/>
<dbReference type="EMBL" id="CU207211">
    <property type="protein sequence ID" value="CAL60486.1"/>
    <property type="molecule type" value="Genomic_DNA"/>
</dbReference>
<dbReference type="SMR" id="A4G1U9"/>
<dbReference type="STRING" id="204773.HEAR0258"/>
<dbReference type="KEGG" id="har:HEAR0258"/>
<dbReference type="eggNOG" id="COG2255">
    <property type="taxonomic scope" value="Bacteria"/>
</dbReference>
<dbReference type="HOGENOM" id="CLU_055599_1_0_4"/>
<dbReference type="OrthoDB" id="9804478at2"/>
<dbReference type="Proteomes" id="UP000006697">
    <property type="component" value="Chromosome"/>
</dbReference>
<dbReference type="GO" id="GO:0005737">
    <property type="term" value="C:cytoplasm"/>
    <property type="evidence" value="ECO:0007669"/>
    <property type="project" value="UniProtKB-SubCell"/>
</dbReference>
<dbReference type="GO" id="GO:0048476">
    <property type="term" value="C:Holliday junction resolvase complex"/>
    <property type="evidence" value="ECO:0007669"/>
    <property type="project" value="UniProtKB-UniRule"/>
</dbReference>
<dbReference type="GO" id="GO:0005524">
    <property type="term" value="F:ATP binding"/>
    <property type="evidence" value="ECO:0007669"/>
    <property type="project" value="UniProtKB-UniRule"/>
</dbReference>
<dbReference type="GO" id="GO:0016887">
    <property type="term" value="F:ATP hydrolysis activity"/>
    <property type="evidence" value="ECO:0007669"/>
    <property type="project" value="InterPro"/>
</dbReference>
<dbReference type="GO" id="GO:0000400">
    <property type="term" value="F:four-way junction DNA binding"/>
    <property type="evidence" value="ECO:0007669"/>
    <property type="project" value="UniProtKB-UniRule"/>
</dbReference>
<dbReference type="GO" id="GO:0009378">
    <property type="term" value="F:four-way junction helicase activity"/>
    <property type="evidence" value="ECO:0007669"/>
    <property type="project" value="InterPro"/>
</dbReference>
<dbReference type="GO" id="GO:0006310">
    <property type="term" value="P:DNA recombination"/>
    <property type="evidence" value="ECO:0007669"/>
    <property type="project" value="UniProtKB-UniRule"/>
</dbReference>
<dbReference type="GO" id="GO:0006281">
    <property type="term" value="P:DNA repair"/>
    <property type="evidence" value="ECO:0007669"/>
    <property type="project" value="UniProtKB-UniRule"/>
</dbReference>
<dbReference type="CDD" id="cd00009">
    <property type="entry name" value="AAA"/>
    <property type="match status" value="1"/>
</dbReference>
<dbReference type="FunFam" id="1.10.10.10:FF:000086">
    <property type="entry name" value="Holliday junction ATP-dependent DNA helicase RuvB"/>
    <property type="match status" value="1"/>
</dbReference>
<dbReference type="FunFam" id="3.40.50.300:FF:000073">
    <property type="entry name" value="Holliday junction ATP-dependent DNA helicase RuvB"/>
    <property type="match status" value="1"/>
</dbReference>
<dbReference type="Gene3D" id="1.10.8.60">
    <property type="match status" value="1"/>
</dbReference>
<dbReference type="Gene3D" id="3.40.50.300">
    <property type="entry name" value="P-loop containing nucleotide triphosphate hydrolases"/>
    <property type="match status" value="1"/>
</dbReference>
<dbReference type="Gene3D" id="1.10.10.10">
    <property type="entry name" value="Winged helix-like DNA-binding domain superfamily/Winged helix DNA-binding domain"/>
    <property type="match status" value="1"/>
</dbReference>
<dbReference type="HAMAP" id="MF_00016">
    <property type="entry name" value="DNA_HJ_migration_RuvB"/>
    <property type="match status" value="1"/>
</dbReference>
<dbReference type="InterPro" id="IPR003593">
    <property type="entry name" value="AAA+_ATPase"/>
</dbReference>
<dbReference type="InterPro" id="IPR041445">
    <property type="entry name" value="AAA_lid_4"/>
</dbReference>
<dbReference type="InterPro" id="IPR004605">
    <property type="entry name" value="DNA_helicase_Holl-junc_RuvB"/>
</dbReference>
<dbReference type="InterPro" id="IPR027417">
    <property type="entry name" value="P-loop_NTPase"/>
</dbReference>
<dbReference type="InterPro" id="IPR008824">
    <property type="entry name" value="RuvB-like_N"/>
</dbReference>
<dbReference type="InterPro" id="IPR008823">
    <property type="entry name" value="RuvB_C"/>
</dbReference>
<dbReference type="InterPro" id="IPR036388">
    <property type="entry name" value="WH-like_DNA-bd_sf"/>
</dbReference>
<dbReference type="InterPro" id="IPR036390">
    <property type="entry name" value="WH_DNA-bd_sf"/>
</dbReference>
<dbReference type="NCBIfam" id="NF000868">
    <property type="entry name" value="PRK00080.1"/>
    <property type="match status" value="1"/>
</dbReference>
<dbReference type="NCBIfam" id="TIGR00635">
    <property type="entry name" value="ruvB"/>
    <property type="match status" value="1"/>
</dbReference>
<dbReference type="PANTHER" id="PTHR42848">
    <property type="match status" value="1"/>
</dbReference>
<dbReference type="PANTHER" id="PTHR42848:SF1">
    <property type="entry name" value="HOLLIDAY JUNCTION BRANCH MIGRATION COMPLEX SUBUNIT RUVB"/>
    <property type="match status" value="1"/>
</dbReference>
<dbReference type="Pfam" id="PF17864">
    <property type="entry name" value="AAA_lid_4"/>
    <property type="match status" value="1"/>
</dbReference>
<dbReference type="Pfam" id="PF05491">
    <property type="entry name" value="RuvB_C"/>
    <property type="match status" value="1"/>
</dbReference>
<dbReference type="Pfam" id="PF05496">
    <property type="entry name" value="RuvB_N"/>
    <property type="match status" value="1"/>
</dbReference>
<dbReference type="SMART" id="SM00382">
    <property type="entry name" value="AAA"/>
    <property type="match status" value="1"/>
</dbReference>
<dbReference type="SUPFAM" id="SSF52540">
    <property type="entry name" value="P-loop containing nucleoside triphosphate hydrolases"/>
    <property type="match status" value="1"/>
</dbReference>
<dbReference type="SUPFAM" id="SSF46785">
    <property type="entry name" value="Winged helix' DNA-binding domain"/>
    <property type="match status" value="1"/>
</dbReference>
<evidence type="ECO:0000255" key="1">
    <source>
        <dbReference type="HAMAP-Rule" id="MF_00016"/>
    </source>
</evidence>
<feature type="chain" id="PRO_0000322799" description="Holliday junction branch migration complex subunit RuvB">
    <location>
        <begin position="1"/>
        <end position="352"/>
    </location>
</feature>
<feature type="region of interest" description="Large ATPase domain (RuvB-L)" evidence="1">
    <location>
        <begin position="5"/>
        <end position="191"/>
    </location>
</feature>
<feature type="region of interest" description="Small ATPAse domain (RuvB-S)" evidence="1">
    <location>
        <begin position="192"/>
        <end position="262"/>
    </location>
</feature>
<feature type="region of interest" description="Head domain (RuvB-H)" evidence="1">
    <location>
        <begin position="265"/>
        <end position="352"/>
    </location>
</feature>
<feature type="binding site" evidence="1">
    <location>
        <position position="30"/>
    </location>
    <ligand>
        <name>ATP</name>
        <dbReference type="ChEBI" id="CHEBI:30616"/>
    </ligand>
</feature>
<feature type="binding site" evidence="1">
    <location>
        <position position="31"/>
    </location>
    <ligand>
        <name>ATP</name>
        <dbReference type="ChEBI" id="CHEBI:30616"/>
    </ligand>
</feature>
<feature type="binding site" evidence="1">
    <location>
        <position position="72"/>
    </location>
    <ligand>
        <name>ATP</name>
        <dbReference type="ChEBI" id="CHEBI:30616"/>
    </ligand>
</feature>
<feature type="binding site" evidence="1">
    <location>
        <position position="75"/>
    </location>
    <ligand>
        <name>ATP</name>
        <dbReference type="ChEBI" id="CHEBI:30616"/>
    </ligand>
</feature>
<feature type="binding site" evidence="1">
    <location>
        <position position="76"/>
    </location>
    <ligand>
        <name>ATP</name>
        <dbReference type="ChEBI" id="CHEBI:30616"/>
    </ligand>
</feature>
<feature type="binding site" evidence="1">
    <location>
        <position position="76"/>
    </location>
    <ligand>
        <name>Mg(2+)</name>
        <dbReference type="ChEBI" id="CHEBI:18420"/>
    </ligand>
</feature>
<feature type="binding site" evidence="1">
    <location>
        <position position="77"/>
    </location>
    <ligand>
        <name>ATP</name>
        <dbReference type="ChEBI" id="CHEBI:30616"/>
    </ligand>
</feature>
<feature type="binding site" evidence="1">
    <location>
        <begin position="138"/>
        <end position="140"/>
    </location>
    <ligand>
        <name>ATP</name>
        <dbReference type="ChEBI" id="CHEBI:30616"/>
    </ligand>
</feature>
<feature type="binding site" evidence="1">
    <location>
        <position position="181"/>
    </location>
    <ligand>
        <name>ATP</name>
        <dbReference type="ChEBI" id="CHEBI:30616"/>
    </ligand>
</feature>
<feature type="binding site" evidence="1">
    <location>
        <position position="191"/>
    </location>
    <ligand>
        <name>ATP</name>
        <dbReference type="ChEBI" id="CHEBI:30616"/>
    </ligand>
</feature>
<feature type="binding site" evidence="1">
    <location>
        <position position="228"/>
    </location>
    <ligand>
        <name>ATP</name>
        <dbReference type="ChEBI" id="CHEBI:30616"/>
    </ligand>
</feature>
<feature type="binding site" evidence="1">
    <location>
        <position position="301"/>
    </location>
    <ligand>
        <name>DNA</name>
        <dbReference type="ChEBI" id="CHEBI:16991"/>
    </ligand>
</feature>
<feature type="binding site" evidence="1">
    <location>
        <position position="320"/>
    </location>
    <ligand>
        <name>DNA</name>
        <dbReference type="ChEBI" id="CHEBI:16991"/>
    </ligand>
</feature>
<feature type="binding site" evidence="1">
    <location>
        <position position="325"/>
    </location>
    <ligand>
        <name>DNA</name>
        <dbReference type="ChEBI" id="CHEBI:16991"/>
    </ligand>
</feature>
<keyword id="KW-0067">ATP-binding</keyword>
<keyword id="KW-0963">Cytoplasm</keyword>
<keyword id="KW-0227">DNA damage</keyword>
<keyword id="KW-0233">DNA recombination</keyword>
<keyword id="KW-0234">DNA repair</keyword>
<keyword id="KW-0238">DNA-binding</keyword>
<keyword id="KW-0378">Hydrolase</keyword>
<keyword id="KW-0547">Nucleotide-binding</keyword>
<keyword id="KW-1185">Reference proteome</keyword>
<gene>
    <name evidence="1" type="primary">ruvB</name>
    <name type="ordered locus">HEAR0258</name>
</gene>
<protein>
    <recommendedName>
        <fullName evidence="1">Holliday junction branch migration complex subunit RuvB</fullName>
        <ecNumber evidence="1">3.6.4.-</ecNumber>
    </recommendedName>
</protein>
<organism>
    <name type="scientific">Herminiimonas arsenicoxydans</name>
    <dbReference type="NCBI Taxonomy" id="204773"/>
    <lineage>
        <taxon>Bacteria</taxon>
        <taxon>Pseudomonadati</taxon>
        <taxon>Pseudomonadota</taxon>
        <taxon>Betaproteobacteria</taxon>
        <taxon>Burkholderiales</taxon>
        <taxon>Oxalobacteraceae</taxon>
        <taxon>Herminiimonas</taxon>
    </lineage>
</organism>